<protein>
    <recommendedName>
        <fullName>Reticulocalbin-1</fullName>
    </recommendedName>
</protein>
<name>RCN1_HUMAN</name>
<evidence type="ECO:0000250" key="1"/>
<evidence type="ECO:0000255" key="2"/>
<evidence type="ECO:0000255" key="3">
    <source>
        <dbReference type="PROSITE-ProRule" id="PRU00448"/>
    </source>
</evidence>
<evidence type="ECO:0000269" key="4">
    <source>
    </source>
</evidence>
<evidence type="ECO:0000269" key="5">
    <source>
    </source>
</evidence>
<evidence type="ECO:0000269" key="6">
    <source>
    </source>
</evidence>
<evidence type="ECO:0000269" key="7">
    <source>
    </source>
</evidence>
<evidence type="ECO:0000303" key="8">
    <source>
    </source>
</evidence>
<evidence type="ECO:0000305" key="9"/>
<evidence type="ECO:0007744" key="10">
    <source>
    </source>
</evidence>
<evidence type="ECO:0007744" key="11">
    <source>
    </source>
</evidence>
<organism>
    <name type="scientific">Homo sapiens</name>
    <name type="common">Human</name>
    <dbReference type="NCBI Taxonomy" id="9606"/>
    <lineage>
        <taxon>Eukaryota</taxon>
        <taxon>Metazoa</taxon>
        <taxon>Chordata</taxon>
        <taxon>Craniata</taxon>
        <taxon>Vertebrata</taxon>
        <taxon>Euteleostomi</taxon>
        <taxon>Mammalia</taxon>
        <taxon>Eutheria</taxon>
        <taxon>Euarchontoglires</taxon>
        <taxon>Primates</taxon>
        <taxon>Haplorrhini</taxon>
        <taxon>Catarrhini</taxon>
        <taxon>Hominidae</taxon>
        <taxon>Homo</taxon>
    </lineage>
</organism>
<comment type="function">
    <text>May regulate calcium-dependent activities in the endoplasmic reticulum lumen or post-ER compartment.</text>
</comment>
<comment type="interaction">
    <interactant intactId="EBI-948278">
        <id>Q15293</id>
    </interactant>
    <interactant intactId="EBI-12092171">
        <id>Q12797-6</id>
        <label>ASPH</label>
    </interactant>
    <organismsDiffer>false</organismsDiffer>
    <experiments>3</experiments>
</comment>
<comment type="interaction">
    <interactant intactId="EBI-948278">
        <id>Q15293</id>
    </interactant>
    <interactant intactId="EBI-1166928">
        <id>Q8N5M1</id>
        <label>ATPAF2</label>
    </interactant>
    <organismsDiffer>false</organismsDiffer>
    <experiments>3</experiments>
</comment>
<comment type="interaction">
    <interactant intactId="EBI-948278">
        <id>Q15293</id>
    </interactant>
    <interactant intactId="EBI-930964">
        <id>P54253</id>
        <label>ATXN1</label>
    </interactant>
    <organismsDiffer>false</organismsDiffer>
    <experiments>9</experiments>
</comment>
<comment type="interaction">
    <interactant intactId="EBI-948278">
        <id>Q15293</id>
    </interactant>
    <interactant intactId="EBI-10988864">
        <id>P46379-2</id>
        <label>BAG6</label>
    </interactant>
    <organismsDiffer>false</organismsDiffer>
    <experiments>3</experiments>
</comment>
<comment type="interaction">
    <interactant intactId="EBI-948278">
        <id>Q15293</id>
    </interactant>
    <interactant intactId="EBI-712959">
        <id>O15182</id>
        <label>CETN3</label>
    </interactant>
    <organismsDiffer>false</organismsDiffer>
    <experiments>5</experiments>
</comment>
<comment type="interaction">
    <interactant intactId="EBI-948278">
        <id>Q15293</id>
    </interactant>
    <interactant intactId="EBI-2213388">
        <id>Q8TEB1</id>
        <label>DCAF11</label>
    </interactant>
    <organismsDiffer>false</organismsDiffer>
    <experiments>5</experiments>
</comment>
<comment type="interaction">
    <interactant intactId="EBI-948278">
        <id>Q15293</id>
    </interactant>
    <interactant intactId="EBI-12593112">
        <id>O75190-2</id>
        <label>DNAJB6</label>
    </interactant>
    <organismsDiffer>false</organismsDiffer>
    <experiments>3</experiments>
</comment>
<comment type="interaction">
    <interactant intactId="EBI-948278">
        <id>Q15293</id>
    </interactant>
    <interactant intactId="EBI-743105">
        <id>Q5JVL4</id>
        <label>EFHC1</label>
    </interactant>
    <organismsDiffer>false</organismsDiffer>
    <experiments>3</experiments>
</comment>
<comment type="interaction">
    <interactant intactId="EBI-948278">
        <id>Q15293</id>
    </interactant>
    <interactant intactId="EBI-744099">
        <id>Q9H0I2</id>
        <label>ENKD1</label>
    </interactant>
    <organismsDiffer>false</organismsDiffer>
    <experiments>3</experiments>
</comment>
<comment type="interaction">
    <interactant intactId="EBI-948278">
        <id>Q15293</id>
    </interactant>
    <interactant intactId="EBI-1752811">
        <id>Q9BQ89</id>
        <label>FAM110A</label>
    </interactant>
    <organismsDiffer>false</organismsDiffer>
    <experiments>3</experiments>
</comment>
<comment type="interaction">
    <interactant intactId="EBI-948278">
        <id>Q15293</id>
    </interactant>
    <interactant intactId="EBI-448202">
        <id>O95257</id>
        <label>GADD45G</label>
    </interactant>
    <organismsDiffer>false</organismsDiffer>
    <experiments>3</experiments>
</comment>
<comment type="interaction">
    <interactant intactId="EBI-948278">
        <id>Q15293</id>
    </interactant>
    <interactant intactId="EBI-2515857">
        <id>O43681</id>
        <label>GET3</label>
    </interactant>
    <organismsDiffer>false</organismsDiffer>
    <experiments>5</experiments>
</comment>
<comment type="interaction">
    <interactant intactId="EBI-948278">
        <id>Q15293</id>
    </interactant>
    <interactant intactId="EBI-740290">
        <id>Q969Y2</id>
        <label>GTPBP3</label>
    </interactant>
    <organismsDiffer>false</organismsDiffer>
    <experiments>3</experiments>
</comment>
<comment type="interaction">
    <interactant intactId="EBI-948278">
        <id>Q15293</id>
    </interactant>
    <interactant intactId="EBI-466029">
        <id>P42858</id>
        <label>HTT</label>
    </interactant>
    <organismsDiffer>false</organismsDiffer>
    <experiments>3</experiments>
</comment>
<comment type="interaction">
    <interactant intactId="EBI-948278">
        <id>Q15293</id>
    </interactant>
    <interactant intactId="EBI-948266">
        <id>O14901</id>
        <label>KLF11</label>
    </interactant>
    <organismsDiffer>false</organismsDiffer>
    <experiments>3</experiments>
</comment>
<comment type="interaction">
    <interactant intactId="EBI-948278">
        <id>Q15293</id>
    </interactant>
    <interactant intactId="EBI-8639312">
        <id>P25800</id>
        <label>LMO1</label>
    </interactant>
    <organismsDiffer>false</organismsDiffer>
    <experiments>3</experiments>
</comment>
<comment type="interaction">
    <interactant intactId="EBI-948278">
        <id>Q15293</id>
    </interactant>
    <interactant intactId="EBI-11959475">
        <id>P25791-3</id>
        <label>LMO2</label>
    </interactant>
    <organismsDiffer>false</organismsDiffer>
    <experiments>3</experiments>
</comment>
<comment type="interaction">
    <interactant intactId="EBI-948278">
        <id>Q15293</id>
    </interactant>
    <interactant intactId="EBI-11742507">
        <id>Q8TAP4-4</id>
        <label>LMO3</label>
    </interactant>
    <organismsDiffer>false</organismsDiffer>
    <experiments>3</experiments>
</comment>
<comment type="interaction">
    <interactant intactId="EBI-948278">
        <id>Q15293</id>
    </interactant>
    <interactant intactId="EBI-2798728">
        <id>P61968</id>
        <label>LMO4</label>
    </interactant>
    <organismsDiffer>false</organismsDiffer>
    <experiments>3</experiments>
</comment>
<comment type="interaction">
    <interactant intactId="EBI-948278">
        <id>Q15293</id>
    </interactant>
    <interactant intactId="EBI-7950783">
        <id>Q96JP2</id>
        <label>MYO15B</label>
    </interactant>
    <organismsDiffer>false</organismsDiffer>
    <experiments>3</experiments>
</comment>
<comment type="interaction">
    <interactant intactId="EBI-948278">
        <id>Q15293</id>
    </interactant>
    <interactant intactId="EBI-347996">
        <id>O43765</id>
        <label>SGTA</label>
    </interactant>
    <organismsDiffer>false</organismsDiffer>
    <experiments>3</experiments>
</comment>
<comment type="interaction">
    <interactant intactId="EBI-948278">
        <id>Q15293</id>
    </interactant>
    <interactant intactId="EBI-744081">
        <id>Q96EQ0</id>
        <label>SGTB</label>
    </interactant>
    <organismsDiffer>false</organismsDiffer>
    <experiments>3</experiments>
</comment>
<comment type="interaction">
    <interactant intactId="EBI-948278">
        <id>Q15293</id>
    </interactant>
    <interactant intactId="EBI-5235340">
        <id>Q7Z699</id>
        <label>SPRED1</label>
    </interactant>
    <organismsDiffer>false</organismsDiffer>
    <experiments>3</experiments>
</comment>
<comment type="interaction">
    <interactant intactId="EBI-948278">
        <id>Q15293</id>
    </interactant>
    <interactant intactId="EBI-3921347">
        <id>P51687</id>
        <label>SUOX</label>
    </interactant>
    <organismsDiffer>false</organismsDiffer>
    <experiments>3</experiments>
</comment>
<comment type="interaction">
    <interactant intactId="EBI-948278">
        <id>Q15293</id>
    </interactant>
    <interactant intactId="EBI-11741890">
        <id>Q86VK4-3</id>
        <label>ZNF410</label>
    </interactant>
    <organismsDiffer>false</organismsDiffer>
    <experiments>3</experiments>
</comment>
<comment type="interaction">
    <interactant intactId="EBI-948278">
        <id>Q15293</id>
    </interactant>
    <interactant intactId="EBI-25475847">
        <id>PRO_0000449619</id>
        <label>rep</label>
        <dbReference type="UniProtKB" id="P0DTD1"/>
    </interactant>
    <organismsDiffer>true</organismsDiffer>
    <experiments>2</experiments>
</comment>
<comment type="subcellular location">
    <subcellularLocation>
        <location>Endoplasmic reticulum lumen</location>
    </subcellularLocation>
</comment>
<comment type="alternative products">
    <event type="alternative splicing"/>
    <isoform>
        <id>Q15293-1</id>
        <name>1</name>
        <sequence type="displayed"/>
    </isoform>
    <isoform>
        <id>Q15293-2</id>
        <name>2</name>
        <sequence type="described" ref="VSP_055511"/>
    </isoform>
</comment>
<comment type="PTM">
    <text evidence="7">O-glycosylated. O-mannosylated by POMT1 and POMT2 and elongated by POMGNT1.</text>
</comment>
<comment type="miscellaneous">
    <text evidence="1">This protein has four functional calcium-binding sites; potential sites II and VI have lost affinity for calcium.</text>
</comment>
<comment type="similarity">
    <text evidence="9">Belongs to the CREC family.</text>
</comment>
<sequence>MARGGRGRRLGLALGLLLALVLAPRVLRAKPTVRKERVVRPDSELGERPPEDNQSFQYDHEAFLGKEDSKTFDQLTPDESKERLGKIVDRIDNDGDGFVTTEELKTWIKRVQKRYIFDNVAKVWKDYDRDKDDKISWEEYKQATYGYYLGNPAEFHDSSDHHTFKKMLPRDERRFKAADLNGDLTATREEFTAFLHPEEFEHMKEIVVLETLEDIDKNGDGFVDQDEYIADMFSHEENGPEPDWVLSEREQFNEFRDLNKDGKLDKDEIRHWILPQDYDHAQAEARHLVYESDKNKDEKLTKEEILENWNMFVGSQATNYGEDLTKNHDEL</sequence>
<dbReference type="EMBL" id="D42073">
    <property type="protein sequence ID" value="BAA07670.1"/>
    <property type="molecule type" value="mRNA"/>
</dbReference>
<dbReference type="EMBL" id="AK293652">
    <property type="protein sequence ID" value="BAH11557.1"/>
    <property type="molecule type" value="mRNA"/>
</dbReference>
<dbReference type="EMBL" id="AL035078">
    <property type="status" value="NOT_ANNOTATED_CDS"/>
    <property type="molecule type" value="Genomic_DNA"/>
</dbReference>
<dbReference type="EMBL" id="AL049635">
    <property type="status" value="NOT_ANNOTATED_CDS"/>
    <property type="molecule type" value="Genomic_DNA"/>
</dbReference>
<dbReference type="EMBL" id="AL078612">
    <property type="status" value="NOT_ANNOTATED_CDS"/>
    <property type="molecule type" value="Genomic_DNA"/>
</dbReference>
<dbReference type="EMBL" id="AL138970">
    <property type="status" value="NOT_ANNOTATED_CDS"/>
    <property type="molecule type" value="Genomic_DNA"/>
</dbReference>
<dbReference type="EMBL" id="Z95332">
    <property type="status" value="NOT_ANNOTATED_CDS"/>
    <property type="molecule type" value="Genomic_DNA"/>
</dbReference>
<dbReference type="EMBL" id="CH471064">
    <property type="protein sequence ID" value="EAW68227.1"/>
    <property type="molecule type" value="Genomic_DNA"/>
</dbReference>
<dbReference type="EMBL" id="CH471064">
    <property type="protein sequence ID" value="EAW68228.1"/>
    <property type="molecule type" value="Genomic_DNA"/>
</dbReference>
<dbReference type="EMBL" id="BC010120">
    <property type="protein sequence ID" value="AAH10120.1"/>
    <property type="molecule type" value="mRNA"/>
</dbReference>
<dbReference type="CCDS" id="CCDS7876.1">
    <molecule id="Q15293-1"/>
</dbReference>
<dbReference type="PIR" id="JC4173">
    <property type="entry name" value="JC4173"/>
</dbReference>
<dbReference type="RefSeq" id="NP_002892.1">
    <molecule id="Q15293-1"/>
    <property type="nucleotide sequence ID" value="NM_002901.4"/>
</dbReference>
<dbReference type="BioGRID" id="111887">
    <property type="interactions" value="294"/>
</dbReference>
<dbReference type="ELM" id="Q15293"/>
<dbReference type="FunCoup" id="Q15293">
    <property type="interactions" value="2168"/>
</dbReference>
<dbReference type="IntAct" id="Q15293">
    <property type="interactions" value="141"/>
</dbReference>
<dbReference type="MINT" id="Q15293"/>
<dbReference type="STRING" id="9606.ENSP00000054950"/>
<dbReference type="GlyConnect" id="1712">
    <property type="glycosylation" value="21 N-Linked glycans (1 site)"/>
</dbReference>
<dbReference type="GlyCosmos" id="Q15293">
    <property type="glycosylation" value="2 sites, 22 glycans"/>
</dbReference>
<dbReference type="GlyGen" id="Q15293">
    <property type="glycosylation" value="5 sites, 93 N-linked glycans (1 site), 2 O-linked glycans (4 sites)"/>
</dbReference>
<dbReference type="iPTMnet" id="Q15293"/>
<dbReference type="MetOSite" id="Q15293"/>
<dbReference type="PhosphoSitePlus" id="Q15293"/>
<dbReference type="BioMuta" id="RCN1"/>
<dbReference type="DMDM" id="2493462"/>
<dbReference type="CPTAC" id="CPTAC-266"/>
<dbReference type="CPTAC" id="CPTAC-267"/>
<dbReference type="jPOST" id="Q15293"/>
<dbReference type="MassIVE" id="Q15293"/>
<dbReference type="PaxDb" id="9606-ENSP00000054950"/>
<dbReference type="PeptideAtlas" id="Q15293"/>
<dbReference type="ProteomicsDB" id="60519">
    <molecule id="Q15293-1"/>
</dbReference>
<dbReference type="ProteomicsDB" id="6347"/>
<dbReference type="Pumba" id="Q15293"/>
<dbReference type="TopDownProteomics" id="Q15293-1">
    <molecule id="Q15293-1"/>
</dbReference>
<dbReference type="Antibodypedia" id="25609">
    <property type="antibodies" value="137 antibodies from 23 providers"/>
</dbReference>
<dbReference type="DNASU" id="5954"/>
<dbReference type="Ensembl" id="ENST00000054950.4">
    <molecule id="Q15293-1"/>
    <property type="protein sequence ID" value="ENSP00000054950.4"/>
    <property type="gene ID" value="ENSG00000049449.10"/>
</dbReference>
<dbReference type="GeneID" id="5954"/>
<dbReference type="KEGG" id="hsa:5954"/>
<dbReference type="MANE-Select" id="ENST00000054950.4">
    <property type="protein sequence ID" value="ENSP00000054950.4"/>
    <property type="RefSeq nucleotide sequence ID" value="NM_002901.4"/>
    <property type="RefSeq protein sequence ID" value="NP_002892.1"/>
</dbReference>
<dbReference type="UCSC" id="uc058acp.1">
    <molecule id="Q15293-1"/>
    <property type="organism name" value="human"/>
</dbReference>
<dbReference type="AGR" id="HGNC:9934"/>
<dbReference type="CTD" id="5954"/>
<dbReference type="DisGeNET" id="5954"/>
<dbReference type="GeneCards" id="RCN1"/>
<dbReference type="HGNC" id="HGNC:9934">
    <property type="gene designation" value="RCN1"/>
</dbReference>
<dbReference type="HPA" id="ENSG00000049449">
    <property type="expression patterns" value="Tissue enriched (epididymis)"/>
</dbReference>
<dbReference type="MIM" id="602735">
    <property type="type" value="gene"/>
</dbReference>
<dbReference type="neXtProt" id="NX_Q15293"/>
<dbReference type="OpenTargets" id="ENSG00000049449"/>
<dbReference type="PharmGKB" id="PA34303"/>
<dbReference type="VEuPathDB" id="HostDB:ENSG00000049449"/>
<dbReference type="eggNOG" id="KOG4223">
    <property type="taxonomic scope" value="Eukaryota"/>
</dbReference>
<dbReference type="GeneTree" id="ENSGT01010000222360"/>
<dbReference type="HOGENOM" id="CLU_044718_0_1_1"/>
<dbReference type="InParanoid" id="Q15293"/>
<dbReference type="OMA" id="DRPGFQY"/>
<dbReference type="OrthoDB" id="293868at2759"/>
<dbReference type="PAN-GO" id="Q15293">
    <property type="GO annotations" value="2 GO annotations based on evolutionary models"/>
</dbReference>
<dbReference type="PhylomeDB" id="Q15293"/>
<dbReference type="TreeFam" id="TF314849"/>
<dbReference type="PathwayCommons" id="Q15293"/>
<dbReference type="Reactome" id="R-HSA-381426">
    <property type="pathway name" value="Regulation of Insulin-like Growth Factor (IGF) transport and uptake by Insulin-like Growth Factor Binding Proteins (IGFBPs)"/>
</dbReference>
<dbReference type="Reactome" id="R-HSA-8957275">
    <property type="pathway name" value="Post-translational protein phosphorylation"/>
</dbReference>
<dbReference type="SignaLink" id="Q15293"/>
<dbReference type="BioGRID-ORCS" id="5954">
    <property type="hits" value="35 hits in 1149 CRISPR screens"/>
</dbReference>
<dbReference type="ChiTaRS" id="RCN1">
    <property type="organism name" value="human"/>
</dbReference>
<dbReference type="GeneWiki" id="RCN1"/>
<dbReference type="GenomeRNAi" id="5954"/>
<dbReference type="Pharos" id="Q15293">
    <property type="development level" value="Tbio"/>
</dbReference>
<dbReference type="PRO" id="PR:Q15293"/>
<dbReference type="Proteomes" id="UP000005640">
    <property type="component" value="Chromosome 11"/>
</dbReference>
<dbReference type="RNAct" id="Q15293">
    <property type="molecule type" value="protein"/>
</dbReference>
<dbReference type="Bgee" id="ENSG00000049449">
    <property type="expression patterns" value="Expressed in corpus epididymis and 204 other cell types or tissues"/>
</dbReference>
<dbReference type="ExpressionAtlas" id="Q15293">
    <property type="expression patterns" value="baseline and differential"/>
</dbReference>
<dbReference type="GO" id="GO:0005783">
    <property type="term" value="C:endoplasmic reticulum"/>
    <property type="evidence" value="ECO:0000314"/>
    <property type="project" value="HPA"/>
</dbReference>
<dbReference type="GO" id="GO:0005788">
    <property type="term" value="C:endoplasmic reticulum lumen"/>
    <property type="evidence" value="ECO:0000304"/>
    <property type="project" value="Reactome"/>
</dbReference>
<dbReference type="GO" id="GO:0005509">
    <property type="term" value="F:calcium ion binding"/>
    <property type="evidence" value="ECO:0000318"/>
    <property type="project" value="GO_Central"/>
</dbReference>
<dbReference type="GO" id="GO:0043010">
    <property type="term" value="P:camera-type eye development"/>
    <property type="evidence" value="ECO:0007669"/>
    <property type="project" value="Ensembl"/>
</dbReference>
<dbReference type="GO" id="GO:0001701">
    <property type="term" value="P:in utero embryonic development"/>
    <property type="evidence" value="ECO:0007669"/>
    <property type="project" value="Ensembl"/>
</dbReference>
<dbReference type="CDD" id="cd16229">
    <property type="entry name" value="EFh_CREC_RCN1"/>
    <property type="match status" value="1"/>
</dbReference>
<dbReference type="FunFam" id="1.10.238.10:FF:000109">
    <property type="entry name" value="calumenin isoform X2"/>
    <property type="match status" value="1"/>
</dbReference>
<dbReference type="FunFam" id="1.10.238.10:FF:000314">
    <property type="entry name" value="Reticulocalbin 1"/>
    <property type="match status" value="1"/>
</dbReference>
<dbReference type="FunFam" id="1.10.238.10:FF:000250">
    <property type="entry name" value="reticulocalbin-1"/>
    <property type="match status" value="1"/>
</dbReference>
<dbReference type="Gene3D" id="1.10.238.10">
    <property type="entry name" value="EF-hand"/>
    <property type="match status" value="3"/>
</dbReference>
<dbReference type="InterPro" id="IPR011992">
    <property type="entry name" value="EF-hand-dom_pair"/>
</dbReference>
<dbReference type="InterPro" id="IPR018247">
    <property type="entry name" value="EF_Hand_1_Ca_BS"/>
</dbReference>
<dbReference type="InterPro" id="IPR002048">
    <property type="entry name" value="EF_hand_dom"/>
</dbReference>
<dbReference type="InterPro" id="IPR027241">
    <property type="entry name" value="Rcn1"/>
</dbReference>
<dbReference type="PANTHER" id="PTHR10827">
    <property type="entry name" value="RETICULOCALBIN"/>
    <property type="match status" value="1"/>
</dbReference>
<dbReference type="PANTHER" id="PTHR10827:SF17">
    <property type="entry name" value="RETICULOCALBIN-1"/>
    <property type="match status" value="1"/>
</dbReference>
<dbReference type="Pfam" id="PF13202">
    <property type="entry name" value="EF-hand_5"/>
    <property type="match status" value="2"/>
</dbReference>
<dbReference type="Pfam" id="PF13499">
    <property type="entry name" value="EF-hand_7"/>
    <property type="match status" value="1"/>
</dbReference>
<dbReference type="SMART" id="SM00054">
    <property type="entry name" value="EFh"/>
    <property type="match status" value="3"/>
</dbReference>
<dbReference type="SUPFAM" id="SSF47473">
    <property type="entry name" value="EF-hand"/>
    <property type="match status" value="2"/>
</dbReference>
<dbReference type="PROSITE" id="PS00018">
    <property type="entry name" value="EF_HAND_1"/>
    <property type="match status" value="4"/>
</dbReference>
<dbReference type="PROSITE" id="PS50222">
    <property type="entry name" value="EF_HAND_2"/>
    <property type="match status" value="6"/>
</dbReference>
<dbReference type="PROSITE" id="PS00014">
    <property type="entry name" value="ER_TARGET"/>
    <property type="match status" value="1"/>
</dbReference>
<reference key="1">
    <citation type="journal article" date="1995" name="J. Biochem.">
        <title>Cloning of a human homologue of mouse reticulocalbin reveals conservation of structural domains in the novel endoplasmic reticulum resident Ca(2+)-binding protein with multiple EF-hand motifs.</title>
        <authorList>
            <person name="Ozawa M."/>
        </authorList>
    </citation>
    <scope>NUCLEOTIDE SEQUENCE [MRNA] (ISOFORM 1)</scope>
</reference>
<reference key="2">
    <citation type="journal article" date="2004" name="Nat. Genet.">
        <title>Complete sequencing and characterization of 21,243 full-length human cDNAs.</title>
        <authorList>
            <person name="Ota T."/>
            <person name="Suzuki Y."/>
            <person name="Nishikawa T."/>
            <person name="Otsuki T."/>
            <person name="Sugiyama T."/>
            <person name="Irie R."/>
            <person name="Wakamatsu A."/>
            <person name="Hayashi K."/>
            <person name="Sato H."/>
            <person name="Nagai K."/>
            <person name="Kimura K."/>
            <person name="Makita H."/>
            <person name="Sekine M."/>
            <person name="Obayashi M."/>
            <person name="Nishi T."/>
            <person name="Shibahara T."/>
            <person name="Tanaka T."/>
            <person name="Ishii S."/>
            <person name="Yamamoto J."/>
            <person name="Saito K."/>
            <person name="Kawai Y."/>
            <person name="Isono Y."/>
            <person name="Nakamura Y."/>
            <person name="Nagahari K."/>
            <person name="Murakami K."/>
            <person name="Yasuda T."/>
            <person name="Iwayanagi T."/>
            <person name="Wagatsuma M."/>
            <person name="Shiratori A."/>
            <person name="Sudo H."/>
            <person name="Hosoiri T."/>
            <person name="Kaku Y."/>
            <person name="Kodaira H."/>
            <person name="Kondo H."/>
            <person name="Sugawara M."/>
            <person name="Takahashi M."/>
            <person name="Kanda K."/>
            <person name="Yokoi T."/>
            <person name="Furuya T."/>
            <person name="Kikkawa E."/>
            <person name="Omura Y."/>
            <person name="Abe K."/>
            <person name="Kamihara K."/>
            <person name="Katsuta N."/>
            <person name="Sato K."/>
            <person name="Tanikawa M."/>
            <person name="Yamazaki M."/>
            <person name="Ninomiya K."/>
            <person name="Ishibashi T."/>
            <person name="Yamashita H."/>
            <person name="Murakawa K."/>
            <person name="Fujimori K."/>
            <person name="Tanai H."/>
            <person name="Kimata M."/>
            <person name="Watanabe M."/>
            <person name="Hiraoka S."/>
            <person name="Chiba Y."/>
            <person name="Ishida S."/>
            <person name="Ono Y."/>
            <person name="Takiguchi S."/>
            <person name="Watanabe S."/>
            <person name="Yosida M."/>
            <person name="Hotuta T."/>
            <person name="Kusano J."/>
            <person name="Kanehori K."/>
            <person name="Takahashi-Fujii A."/>
            <person name="Hara H."/>
            <person name="Tanase T.-O."/>
            <person name="Nomura Y."/>
            <person name="Togiya S."/>
            <person name="Komai F."/>
            <person name="Hara R."/>
            <person name="Takeuchi K."/>
            <person name="Arita M."/>
            <person name="Imose N."/>
            <person name="Musashino K."/>
            <person name="Yuuki H."/>
            <person name="Oshima A."/>
            <person name="Sasaki N."/>
            <person name="Aotsuka S."/>
            <person name="Yoshikawa Y."/>
            <person name="Matsunawa H."/>
            <person name="Ichihara T."/>
            <person name="Shiohata N."/>
            <person name="Sano S."/>
            <person name="Moriya S."/>
            <person name="Momiyama H."/>
            <person name="Satoh N."/>
            <person name="Takami S."/>
            <person name="Terashima Y."/>
            <person name="Suzuki O."/>
            <person name="Nakagawa S."/>
            <person name="Senoh A."/>
            <person name="Mizoguchi H."/>
            <person name="Goto Y."/>
            <person name="Shimizu F."/>
            <person name="Wakebe H."/>
            <person name="Hishigaki H."/>
            <person name="Watanabe T."/>
            <person name="Sugiyama A."/>
            <person name="Takemoto M."/>
            <person name="Kawakami B."/>
            <person name="Yamazaki M."/>
            <person name="Watanabe K."/>
            <person name="Kumagai A."/>
            <person name="Itakura S."/>
            <person name="Fukuzumi Y."/>
            <person name="Fujimori Y."/>
            <person name="Komiyama M."/>
            <person name="Tashiro H."/>
            <person name="Tanigami A."/>
            <person name="Fujiwara T."/>
            <person name="Ono T."/>
            <person name="Yamada K."/>
            <person name="Fujii Y."/>
            <person name="Ozaki K."/>
            <person name="Hirao M."/>
            <person name="Ohmori Y."/>
            <person name="Kawabata A."/>
            <person name="Hikiji T."/>
            <person name="Kobatake N."/>
            <person name="Inagaki H."/>
            <person name="Ikema Y."/>
            <person name="Okamoto S."/>
            <person name="Okitani R."/>
            <person name="Kawakami T."/>
            <person name="Noguchi S."/>
            <person name="Itoh T."/>
            <person name="Shigeta K."/>
            <person name="Senba T."/>
            <person name="Matsumura K."/>
            <person name="Nakajima Y."/>
            <person name="Mizuno T."/>
            <person name="Morinaga M."/>
            <person name="Sasaki M."/>
            <person name="Togashi T."/>
            <person name="Oyama M."/>
            <person name="Hata H."/>
            <person name="Watanabe M."/>
            <person name="Komatsu T."/>
            <person name="Mizushima-Sugano J."/>
            <person name="Satoh T."/>
            <person name="Shirai Y."/>
            <person name="Takahashi Y."/>
            <person name="Nakagawa K."/>
            <person name="Okumura K."/>
            <person name="Nagase T."/>
            <person name="Nomura N."/>
            <person name="Kikuchi H."/>
            <person name="Masuho Y."/>
            <person name="Yamashita R."/>
            <person name="Nakai K."/>
            <person name="Yada T."/>
            <person name="Nakamura Y."/>
            <person name="Ohara O."/>
            <person name="Isogai T."/>
            <person name="Sugano S."/>
        </authorList>
    </citation>
    <scope>NUCLEOTIDE SEQUENCE [LARGE SCALE MRNA] (ISOFORM 2)</scope>
    <source>
        <tissue>Cerebellum</tissue>
    </source>
</reference>
<reference key="3">
    <citation type="journal article" date="2006" name="Nature">
        <title>Human chromosome 11 DNA sequence and analysis including novel gene identification.</title>
        <authorList>
            <person name="Taylor T.D."/>
            <person name="Noguchi H."/>
            <person name="Totoki Y."/>
            <person name="Toyoda A."/>
            <person name="Kuroki Y."/>
            <person name="Dewar K."/>
            <person name="Lloyd C."/>
            <person name="Itoh T."/>
            <person name="Takeda T."/>
            <person name="Kim D.-W."/>
            <person name="She X."/>
            <person name="Barlow K.F."/>
            <person name="Bloom T."/>
            <person name="Bruford E."/>
            <person name="Chang J.L."/>
            <person name="Cuomo C.A."/>
            <person name="Eichler E."/>
            <person name="FitzGerald M.G."/>
            <person name="Jaffe D.B."/>
            <person name="LaButti K."/>
            <person name="Nicol R."/>
            <person name="Park H.-S."/>
            <person name="Seaman C."/>
            <person name="Sougnez C."/>
            <person name="Yang X."/>
            <person name="Zimmer A.R."/>
            <person name="Zody M.C."/>
            <person name="Birren B.W."/>
            <person name="Nusbaum C."/>
            <person name="Fujiyama A."/>
            <person name="Hattori M."/>
            <person name="Rogers J."/>
            <person name="Lander E.S."/>
            <person name="Sakaki Y."/>
        </authorList>
    </citation>
    <scope>NUCLEOTIDE SEQUENCE [LARGE SCALE GENOMIC DNA]</scope>
</reference>
<reference key="4">
    <citation type="submission" date="2005-09" db="EMBL/GenBank/DDBJ databases">
        <authorList>
            <person name="Mural R.J."/>
            <person name="Istrail S."/>
            <person name="Sutton G.G."/>
            <person name="Florea L."/>
            <person name="Halpern A.L."/>
            <person name="Mobarry C.M."/>
            <person name="Lippert R."/>
            <person name="Walenz B."/>
            <person name="Shatkay H."/>
            <person name="Dew I."/>
            <person name="Miller J.R."/>
            <person name="Flanigan M.J."/>
            <person name="Edwards N.J."/>
            <person name="Bolanos R."/>
            <person name="Fasulo D."/>
            <person name="Halldorsson B.V."/>
            <person name="Hannenhalli S."/>
            <person name="Turner R."/>
            <person name="Yooseph S."/>
            <person name="Lu F."/>
            <person name="Nusskern D.R."/>
            <person name="Shue B.C."/>
            <person name="Zheng X.H."/>
            <person name="Zhong F."/>
            <person name="Delcher A.L."/>
            <person name="Huson D.H."/>
            <person name="Kravitz S.A."/>
            <person name="Mouchard L."/>
            <person name="Reinert K."/>
            <person name="Remington K.A."/>
            <person name="Clark A.G."/>
            <person name="Waterman M.S."/>
            <person name="Eichler E.E."/>
            <person name="Adams M.D."/>
            <person name="Hunkapiller M.W."/>
            <person name="Myers E.W."/>
            <person name="Venter J.C."/>
        </authorList>
    </citation>
    <scope>NUCLEOTIDE SEQUENCE [LARGE SCALE GENOMIC DNA]</scope>
</reference>
<reference key="5">
    <citation type="journal article" date="2004" name="Genome Res.">
        <title>The status, quality, and expansion of the NIH full-length cDNA project: the Mammalian Gene Collection (MGC).</title>
        <authorList>
            <consortium name="The MGC Project Team"/>
        </authorList>
    </citation>
    <scope>NUCLEOTIDE SEQUENCE [LARGE SCALE MRNA] (ISOFORM 1)</scope>
    <source>
        <tissue>Ovary</tissue>
    </source>
</reference>
<reference key="6">
    <citation type="journal article" date="2009" name="J. Proteome Res.">
        <title>Glycoproteomics analysis of human liver tissue by combination of multiple enzyme digestion and hydrazide chemistry.</title>
        <authorList>
            <person name="Chen R."/>
            <person name="Jiang X."/>
            <person name="Sun D."/>
            <person name="Han G."/>
            <person name="Wang F."/>
            <person name="Ye M."/>
            <person name="Wang L."/>
            <person name="Zou H."/>
        </authorList>
    </citation>
    <scope>GLYCOSYLATION [LARGE SCALE ANALYSIS] AT ASN-53</scope>
    <source>
        <tissue>Liver</tissue>
    </source>
</reference>
<reference key="7">
    <citation type="journal article" date="2010" name="Sci. Signal.">
        <title>Quantitative phosphoproteomics reveals widespread full phosphorylation site occupancy during mitosis.</title>
        <authorList>
            <person name="Olsen J.V."/>
            <person name="Vermeulen M."/>
            <person name="Santamaria A."/>
            <person name="Kumar C."/>
            <person name="Miller M.L."/>
            <person name="Jensen L.J."/>
            <person name="Gnad F."/>
            <person name="Cox J."/>
            <person name="Jensen T.S."/>
            <person name="Nigg E.A."/>
            <person name="Brunak S."/>
            <person name="Mann M."/>
        </authorList>
    </citation>
    <scope>PHOSPHORYLATION [LARGE SCALE ANALYSIS] AT THR-76</scope>
    <scope>IDENTIFICATION BY MASS SPECTROMETRY [LARGE SCALE ANALYSIS]</scope>
    <source>
        <tissue>Cervix carcinoma</tissue>
    </source>
</reference>
<reference key="8">
    <citation type="journal article" date="2011" name="BMC Syst. Biol.">
        <title>Initial characterization of the human central proteome.</title>
        <authorList>
            <person name="Burkard T.R."/>
            <person name="Planyavsky M."/>
            <person name="Kaupe I."/>
            <person name="Breitwieser F.P."/>
            <person name="Buerckstuemmer T."/>
            <person name="Bennett K.L."/>
            <person name="Superti-Furga G."/>
            <person name="Colinge J."/>
        </authorList>
    </citation>
    <scope>IDENTIFICATION BY MASS SPECTROMETRY [LARGE SCALE ANALYSIS]</scope>
</reference>
<reference key="9">
    <citation type="journal article" date="2014" name="J. Proteomics">
        <title>An enzyme assisted RP-RPLC approach for in-depth analysis of human liver phosphoproteome.</title>
        <authorList>
            <person name="Bian Y."/>
            <person name="Song C."/>
            <person name="Cheng K."/>
            <person name="Dong M."/>
            <person name="Wang F."/>
            <person name="Huang J."/>
            <person name="Sun D."/>
            <person name="Wang L."/>
            <person name="Ye M."/>
            <person name="Zou H."/>
        </authorList>
    </citation>
    <scope>PHOSPHORYLATION [LARGE SCALE ANALYSIS] AT SER-55; THR-76 AND SER-80</scope>
    <scope>IDENTIFICATION BY MASS SPECTROMETRY [LARGE SCALE ANALYSIS]</scope>
    <source>
        <tissue>Liver</tissue>
    </source>
</reference>
<reference key="10">
    <citation type="journal article" date="2015" name="Cell">
        <title>A single kinase generates the majority of the secreted phosphoproteome.</title>
        <authorList>
            <person name="Tagliabracci V.S."/>
            <person name="Wiley S.E."/>
            <person name="Guo X."/>
            <person name="Kinch L.N."/>
            <person name="Durrant E."/>
            <person name="Wen J."/>
            <person name="Xiao J."/>
            <person name="Cui J."/>
            <person name="Nguyen K.B."/>
            <person name="Engel J.L."/>
            <person name="Coon J.J."/>
            <person name="Grishin N."/>
            <person name="Pinna L.A."/>
            <person name="Pagliarini D.J."/>
            <person name="Dixon J.E."/>
        </authorList>
    </citation>
    <scope>PHOSPHORYLATION AT SER-80</scope>
</reference>
<reference key="11">
    <citation type="journal article" date="2015" name="Proteomics">
        <title>N-terminome analysis of the human mitochondrial proteome.</title>
        <authorList>
            <person name="Vaca Jacome A.S."/>
            <person name="Rabilloud T."/>
            <person name="Schaeffer-Reiss C."/>
            <person name="Rompais M."/>
            <person name="Ayoub D."/>
            <person name="Lane L."/>
            <person name="Bairoch A."/>
            <person name="Van Dorsselaer A."/>
            <person name="Carapito C."/>
        </authorList>
    </citation>
    <scope>IDENTIFICATION BY MASS SPECTROMETRY [LARGE SCALE ANALYSIS]</scope>
</reference>
<reference key="12">
    <citation type="journal article" date="2017" name="J. Biol. Chem.">
        <title>Mammalian O-mannosylation of cadherins and plexins is independent of protein O-mannosyltransferases 1 and 2.</title>
        <authorList>
            <person name="Larsen I.S.B."/>
            <person name="Narimatsu Y."/>
            <person name="Joshi H.J."/>
            <person name="Yang Z."/>
            <person name="Harrison O.J."/>
            <person name="Brasch J."/>
            <person name="Shapiro L."/>
            <person name="Honig B."/>
            <person name="Vakhrushev S.Y."/>
            <person name="Clausen H."/>
            <person name="Halim A."/>
        </authorList>
    </citation>
    <scope>GLYCOSYLATION</scope>
</reference>
<reference key="13">
    <citation type="journal article" date="2006" name="Science">
        <title>The consensus coding sequences of human breast and colorectal cancers.</title>
        <authorList>
            <person name="Sjoeblom T."/>
            <person name="Jones S."/>
            <person name="Wood L.D."/>
            <person name="Parsons D.W."/>
            <person name="Lin J."/>
            <person name="Barber T.D."/>
            <person name="Mandelker D."/>
            <person name="Leary R.J."/>
            <person name="Ptak J."/>
            <person name="Silliman N."/>
            <person name="Szabo S."/>
            <person name="Buckhaults P."/>
            <person name="Farrell C."/>
            <person name="Meeh P."/>
            <person name="Markowitz S.D."/>
            <person name="Willis J."/>
            <person name="Dawson D."/>
            <person name="Willson J.K.V."/>
            <person name="Gazdar A.F."/>
            <person name="Hartigan J."/>
            <person name="Wu L."/>
            <person name="Liu C."/>
            <person name="Parmigiani G."/>
            <person name="Park B.H."/>
            <person name="Bachman K.E."/>
            <person name="Papadopoulos N."/>
            <person name="Vogelstein B."/>
            <person name="Kinzler K.W."/>
            <person name="Velculescu V.E."/>
        </authorList>
    </citation>
    <scope>VARIANT [LARGE SCALE ANALYSIS] LEU-117</scope>
</reference>
<feature type="signal peptide" evidence="2">
    <location>
        <begin position="1"/>
        <end position="29"/>
    </location>
</feature>
<feature type="chain" id="PRO_0000004145" description="Reticulocalbin-1">
    <location>
        <begin position="30"/>
        <end position="331"/>
    </location>
</feature>
<feature type="domain" description="EF-hand 1" evidence="3">
    <location>
        <begin position="79"/>
        <end position="114"/>
    </location>
</feature>
<feature type="domain" description="EF-hand 2" evidence="3">
    <location>
        <begin position="115"/>
        <end position="150"/>
    </location>
</feature>
<feature type="domain" description="EF-hand 3" evidence="3">
    <location>
        <begin position="166"/>
        <end position="201"/>
    </location>
</feature>
<feature type="domain" description="EF-hand 4" evidence="3">
    <location>
        <begin position="203"/>
        <end position="238"/>
    </location>
</feature>
<feature type="domain" description="EF-hand 5" evidence="3">
    <location>
        <begin position="244"/>
        <end position="279"/>
    </location>
</feature>
<feature type="domain" description="EF-hand 6" evidence="3">
    <location>
        <begin position="280"/>
        <end position="315"/>
    </location>
</feature>
<feature type="short sequence motif" description="Prevents secretion from ER">
    <location>
        <begin position="328"/>
        <end position="331"/>
    </location>
</feature>
<feature type="binding site" evidence="3">
    <location>
        <position position="92"/>
    </location>
    <ligand>
        <name>Ca(2+)</name>
        <dbReference type="ChEBI" id="CHEBI:29108"/>
        <label>1</label>
    </ligand>
</feature>
<feature type="binding site" evidence="3">
    <location>
        <position position="94"/>
    </location>
    <ligand>
        <name>Ca(2+)</name>
        <dbReference type="ChEBI" id="CHEBI:29108"/>
        <label>1</label>
    </ligand>
</feature>
<feature type="binding site" evidence="3">
    <location>
        <position position="96"/>
    </location>
    <ligand>
        <name>Ca(2+)</name>
        <dbReference type="ChEBI" id="CHEBI:29108"/>
        <label>1</label>
    </ligand>
</feature>
<feature type="binding site" evidence="3">
    <location>
        <position position="103"/>
    </location>
    <ligand>
        <name>Ca(2+)</name>
        <dbReference type="ChEBI" id="CHEBI:29108"/>
        <label>1</label>
    </ligand>
</feature>
<feature type="binding site" evidence="3">
    <location>
        <position position="128"/>
    </location>
    <ligand>
        <name>Ca(2+)</name>
        <dbReference type="ChEBI" id="CHEBI:29108"/>
        <label>2</label>
    </ligand>
</feature>
<feature type="binding site" evidence="3">
    <location>
        <position position="130"/>
    </location>
    <ligand>
        <name>Ca(2+)</name>
        <dbReference type="ChEBI" id="CHEBI:29108"/>
        <label>2</label>
    </ligand>
</feature>
<feature type="binding site" evidence="3">
    <location>
        <position position="132"/>
    </location>
    <ligand>
        <name>Ca(2+)</name>
        <dbReference type="ChEBI" id="CHEBI:29108"/>
        <label>2</label>
    </ligand>
</feature>
<feature type="binding site" evidence="3">
    <location>
        <position position="134"/>
    </location>
    <ligand>
        <name>Ca(2+)</name>
        <dbReference type="ChEBI" id="CHEBI:29108"/>
        <label>2</label>
    </ligand>
</feature>
<feature type="binding site" evidence="3">
    <location>
        <position position="139"/>
    </location>
    <ligand>
        <name>Ca(2+)</name>
        <dbReference type="ChEBI" id="CHEBI:29108"/>
        <label>2</label>
    </ligand>
</feature>
<feature type="binding site" evidence="9">
    <location>
        <position position="179"/>
    </location>
    <ligand>
        <name>Ca(2+)</name>
        <dbReference type="ChEBI" id="CHEBI:29108"/>
        <label>3</label>
    </ligand>
</feature>
<feature type="binding site" evidence="9">
    <location>
        <position position="181"/>
    </location>
    <ligand>
        <name>Ca(2+)</name>
        <dbReference type="ChEBI" id="CHEBI:29108"/>
        <label>3</label>
    </ligand>
</feature>
<feature type="binding site" evidence="9">
    <location>
        <position position="183"/>
    </location>
    <ligand>
        <name>Ca(2+)</name>
        <dbReference type="ChEBI" id="CHEBI:29108"/>
        <label>3</label>
    </ligand>
</feature>
<feature type="binding site" evidence="9">
    <location>
        <position position="185"/>
    </location>
    <ligand>
        <name>Ca(2+)</name>
        <dbReference type="ChEBI" id="CHEBI:29108"/>
        <label>3</label>
    </ligand>
</feature>
<feature type="binding site" evidence="9">
    <location>
        <position position="190"/>
    </location>
    <ligand>
        <name>Ca(2+)</name>
        <dbReference type="ChEBI" id="CHEBI:29108"/>
        <label>3</label>
    </ligand>
</feature>
<feature type="binding site" evidence="3">
    <location>
        <position position="216"/>
    </location>
    <ligand>
        <name>Ca(2+)</name>
        <dbReference type="ChEBI" id="CHEBI:29108"/>
        <label>4</label>
    </ligand>
</feature>
<feature type="binding site" evidence="3">
    <location>
        <position position="218"/>
    </location>
    <ligand>
        <name>Ca(2+)</name>
        <dbReference type="ChEBI" id="CHEBI:29108"/>
        <label>4</label>
    </ligand>
</feature>
<feature type="binding site" evidence="3">
    <location>
        <position position="220"/>
    </location>
    <ligand>
        <name>Ca(2+)</name>
        <dbReference type="ChEBI" id="CHEBI:29108"/>
        <label>4</label>
    </ligand>
</feature>
<feature type="binding site" evidence="3">
    <location>
        <position position="227"/>
    </location>
    <ligand>
        <name>Ca(2+)</name>
        <dbReference type="ChEBI" id="CHEBI:29108"/>
        <label>4</label>
    </ligand>
</feature>
<feature type="binding site" evidence="3">
    <location>
        <position position="257"/>
    </location>
    <ligand>
        <name>Ca(2+)</name>
        <dbReference type="ChEBI" id="CHEBI:29108"/>
        <label>5</label>
    </ligand>
</feature>
<feature type="binding site" evidence="3">
    <location>
        <position position="259"/>
    </location>
    <ligand>
        <name>Ca(2+)</name>
        <dbReference type="ChEBI" id="CHEBI:29108"/>
        <label>5</label>
    </ligand>
</feature>
<feature type="binding site" evidence="3">
    <location>
        <position position="261"/>
    </location>
    <ligand>
        <name>Ca(2+)</name>
        <dbReference type="ChEBI" id="CHEBI:29108"/>
        <label>5</label>
    </ligand>
</feature>
<feature type="binding site" evidence="3">
    <location>
        <position position="263"/>
    </location>
    <ligand>
        <name>Ca(2+)</name>
        <dbReference type="ChEBI" id="CHEBI:29108"/>
        <label>5</label>
    </ligand>
</feature>
<feature type="binding site" evidence="3">
    <location>
        <position position="268"/>
    </location>
    <ligand>
        <name>Ca(2+)</name>
        <dbReference type="ChEBI" id="CHEBI:29108"/>
        <label>5</label>
    </ligand>
</feature>
<feature type="binding site" evidence="9">
    <location>
        <position position="293"/>
    </location>
    <ligand>
        <name>Ca(2+)</name>
        <dbReference type="ChEBI" id="CHEBI:29108"/>
        <label>6</label>
    </ligand>
</feature>
<feature type="binding site" evidence="9">
    <location>
        <position position="295"/>
    </location>
    <ligand>
        <name>Ca(2+)</name>
        <dbReference type="ChEBI" id="CHEBI:29108"/>
        <label>6</label>
    </ligand>
</feature>
<feature type="binding site" evidence="9">
    <location>
        <position position="297"/>
    </location>
    <ligand>
        <name>Ca(2+)</name>
        <dbReference type="ChEBI" id="CHEBI:29108"/>
        <label>6</label>
    </ligand>
</feature>
<feature type="binding site" evidence="9">
    <location>
        <position position="299"/>
    </location>
    <ligand>
        <name>Ca(2+)</name>
        <dbReference type="ChEBI" id="CHEBI:29108"/>
        <label>6</label>
    </ligand>
</feature>
<feature type="binding site" evidence="9">
    <location>
        <position position="304"/>
    </location>
    <ligand>
        <name>Ca(2+)</name>
        <dbReference type="ChEBI" id="CHEBI:29108"/>
        <label>6</label>
    </ligand>
</feature>
<feature type="modified residue" description="Phosphoserine" evidence="11">
    <location>
        <position position="55"/>
    </location>
</feature>
<feature type="modified residue" description="Phosphothreonine" evidence="10 11">
    <location>
        <position position="76"/>
    </location>
</feature>
<feature type="modified residue" description="Phosphoserine; by FAM20C" evidence="6 11">
    <location>
        <position position="80"/>
    </location>
</feature>
<feature type="glycosylation site" description="N-linked (GlcNAc...) asparagine" evidence="5">
    <location>
        <position position="53"/>
    </location>
</feature>
<feature type="splice variant" id="VSP_055511" description="In isoform 2." evidence="8">
    <original>MARGGRGRRLGLALGLLLALVLAPRVLRAKPTVRKERVVRPDSELGERPPEDNQSFQYDHEAFLGKEDSKTFDQLTPDESKERLG</original>
    <variation>MTGGEGPLPTAKQATCSPPSSRERNPRRRGSRPR</variation>
    <location>
        <begin position="1"/>
        <end position="85"/>
    </location>
</feature>
<feature type="sequence variant" id="VAR_011965" description="In dbSNP:rs1804281.">
    <original>D</original>
    <variation>Y</variation>
    <location>
        <position position="73"/>
    </location>
</feature>
<feature type="sequence variant" id="VAR_035460" description="In a colorectal cancer sample; somatic mutation." evidence="4">
    <original>F</original>
    <variation>L</variation>
    <location>
        <position position="117"/>
    </location>
</feature>
<proteinExistence type="evidence at protein level"/>
<accession>Q15293</accession>
<accession>B7Z1M1</accession>
<accession>D3DR00</accession>
<keyword id="KW-0025">Alternative splicing</keyword>
<keyword id="KW-0106">Calcium</keyword>
<keyword id="KW-0256">Endoplasmic reticulum</keyword>
<keyword id="KW-0325">Glycoprotein</keyword>
<keyword id="KW-0479">Metal-binding</keyword>
<keyword id="KW-0597">Phosphoprotein</keyword>
<keyword id="KW-1267">Proteomics identification</keyword>
<keyword id="KW-1185">Reference proteome</keyword>
<keyword id="KW-0677">Repeat</keyword>
<keyword id="KW-0732">Signal</keyword>
<gene>
    <name type="primary">RCN1</name>
    <name type="synonym">RCN</name>
</gene>